<proteinExistence type="inferred from homology"/>
<reference key="1">
    <citation type="journal article" date="2002" name="Mol. Genet. Genomics">
        <title>The genes encoding subunits of ATP synthase are conserved in the reduced plastid genome of the heterotrophic alga Prototheca wickerhamii.</title>
        <authorList>
            <person name="Knauf U."/>
            <person name="Hachtel W."/>
        </authorList>
    </citation>
    <scope>NUCLEOTIDE SEQUENCE [GENOMIC DNA]</scope>
    <source>
        <strain>263-11</strain>
    </source>
</reference>
<reference key="2">
    <citation type="submission" date="1997-12" db="EMBL/GenBank/DDBJ databases">
        <authorList>
            <person name="Knauf U."/>
            <person name="Wolff G."/>
            <person name="Kueck U."/>
            <person name="Hachtel W."/>
        </authorList>
    </citation>
    <scope>NUCLEOTIDE SEQUENCE [GENOMIC DNA] OF 47-207</scope>
    <source>
        <strain>263-11</strain>
    </source>
</reference>
<keyword id="KW-0934">Plastid</keyword>
<keyword id="KW-0687">Ribonucleoprotein</keyword>
<keyword id="KW-0689">Ribosomal protein</keyword>
<keyword id="KW-0694">RNA-binding</keyword>
<keyword id="KW-0699">rRNA-binding</keyword>
<organism>
    <name type="scientific">Prototheca wickerhamii</name>
    <dbReference type="NCBI Taxonomy" id="3111"/>
    <lineage>
        <taxon>Eukaryota</taxon>
        <taxon>Viridiplantae</taxon>
        <taxon>Chlorophyta</taxon>
        <taxon>core chlorophytes</taxon>
        <taxon>Trebouxiophyceae</taxon>
        <taxon>Chlorellales</taxon>
        <taxon>Chlorellaceae</taxon>
        <taxon>Prototheca</taxon>
    </lineage>
</organism>
<name>RR4_PROWI</name>
<accession>O47032</accession>
<accession>Q9TJR7</accession>
<gene>
    <name type="primary">rps4</name>
</gene>
<dbReference type="EMBL" id="AJ245645">
    <property type="protein sequence ID" value="CAB53104.1"/>
    <property type="molecule type" value="Genomic_DNA"/>
</dbReference>
<dbReference type="EMBL" id="AJ222802">
    <property type="protein sequence ID" value="CAA10996.1"/>
    <property type="molecule type" value="Genomic_DNA"/>
</dbReference>
<dbReference type="SMR" id="O47032"/>
<dbReference type="GO" id="GO:0009536">
    <property type="term" value="C:plastid"/>
    <property type="evidence" value="ECO:0007669"/>
    <property type="project" value="UniProtKB-SubCell"/>
</dbReference>
<dbReference type="GO" id="GO:0015935">
    <property type="term" value="C:small ribosomal subunit"/>
    <property type="evidence" value="ECO:0007669"/>
    <property type="project" value="InterPro"/>
</dbReference>
<dbReference type="GO" id="GO:0019843">
    <property type="term" value="F:rRNA binding"/>
    <property type="evidence" value="ECO:0007669"/>
    <property type="project" value="UniProtKB-KW"/>
</dbReference>
<dbReference type="GO" id="GO:0003735">
    <property type="term" value="F:structural constituent of ribosome"/>
    <property type="evidence" value="ECO:0007669"/>
    <property type="project" value="InterPro"/>
</dbReference>
<dbReference type="GO" id="GO:0042274">
    <property type="term" value="P:ribosomal small subunit biogenesis"/>
    <property type="evidence" value="ECO:0007669"/>
    <property type="project" value="TreeGrafter"/>
</dbReference>
<dbReference type="GO" id="GO:0006412">
    <property type="term" value="P:translation"/>
    <property type="evidence" value="ECO:0007669"/>
    <property type="project" value="InterPro"/>
</dbReference>
<dbReference type="CDD" id="cd00165">
    <property type="entry name" value="S4"/>
    <property type="match status" value="1"/>
</dbReference>
<dbReference type="FunFam" id="3.10.290.10:FF:000001">
    <property type="entry name" value="30S ribosomal protein S4"/>
    <property type="match status" value="1"/>
</dbReference>
<dbReference type="FunFam" id="1.10.1050.10:FF:000002">
    <property type="entry name" value="30S ribosomal protein S4, chloroplastic"/>
    <property type="match status" value="1"/>
</dbReference>
<dbReference type="Gene3D" id="1.10.1050.10">
    <property type="entry name" value="Ribosomal Protein S4 Delta 41, Chain A, domain 1"/>
    <property type="match status" value="1"/>
</dbReference>
<dbReference type="Gene3D" id="3.10.290.10">
    <property type="entry name" value="RNA-binding S4 domain"/>
    <property type="match status" value="1"/>
</dbReference>
<dbReference type="HAMAP" id="MF_01306_B">
    <property type="entry name" value="Ribosomal_uS4_B"/>
    <property type="match status" value="1"/>
</dbReference>
<dbReference type="InterPro" id="IPR022801">
    <property type="entry name" value="Ribosomal_uS4"/>
</dbReference>
<dbReference type="InterPro" id="IPR005709">
    <property type="entry name" value="Ribosomal_uS4_bac-type"/>
</dbReference>
<dbReference type="InterPro" id="IPR018079">
    <property type="entry name" value="Ribosomal_uS4_CS"/>
</dbReference>
<dbReference type="InterPro" id="IPR001912">
    <property type="entry name" value="Ribosomal_uS4_N"/>
</dbReference>
<dbReference type="InterPro" id="IPR002942">
    <property type="entry name" value="S4_RNA-bd"/>
</dbReference>
<dbReference type="InterPro" id="IPR036986">
    <property type="entry name" value="S4_RNA-bd_sf"/>
</dbReference>
<dbReference type="NCBIfam" id="NF003717">
    <property type="entry name" value="PRK05327.1"/>
    <property type="match status" value="1"/>
</dbReference>
<dbReference type="NCBIfam" id="TIGR01017">
    <property type="entry name" value="rpsD_bact"/>
    <property type="match status" value="1"/>
</dbReference>
<dbReference type="PANTHER" id="PTHR11831">
    <property type="entry name" value="30S 40S RIBOSOMAL PROTEIN"/>
    <property type="match status" value="1"/>
</dbReference>
<dbReference type="PANTHER" id="PTHR11831:SF4">
    <property type="entry name" value="SMALL RIBOSOMAL SUBUNIT PROTEIN US4M"/>
    <property type="match status" value="1"/>
</dbReference>
<dbReference type="Pfam" id="PF00163">
    <property type="entry name" value="Ribosomal_S4"/>
    <property type="match status" value="1"/>
</dbReference>
<dbReference type="Pfam" id="PF01479">
    <property type="entry name" value="S4"/>
    <property type="match status" value="1"/>
</dbReference>
<dbReference type="SMART" id="SM01390">
    <property type="entry name" value="Ribosomal_S4"/>
    <property type="match status" value="1"/>
</dbReference>
<dbReference type="SMART" id="SM00363">
    <property type="entry name" value="S4"/>
    <property type="match status" value="1"/>
</dbReference>
<dbReference type="SUPFAM" id="SSF55174">
    <property type="entry name" value="Alpha-L RNA-binding motif"/>
    <property type="match status" value="1"/>
</dbReference>
<dbReference type="PROSITE" id="PS00632">
    <property type="entry name" value="RIBOSOMAL_S4"/>
    <property type="match status" value="1"/>
</dbReference>
<dbReference type="PROSITE" id="PS50889">
    <property type="entry name" value="S4"/>
    <property type="match status" value="1"/>
</dbReference>
<evidence type="ECO:0000250" key="1"/>
<evidence type="ECO:0000256" key="2">
    <source>
        <dbReference type="SAM" id="MobiDB-lite"/>
    </source>
</evidence>
<evidence type="ECO:0000305" key="3"/>
<protein>
    <recommendedName>
        <fullName evidence="3">Small ribosomal subunit protein uS4c</fullName>
    </recommendedName>
    <alternativeName>
        <fullName>Plastid 30S ribosomal protein S4</fullName>
    </alternativeName>
</protein>
<comment type="function">
    <text evidence="1">One of the primary rRNA binding proteins, it binds directly to 16S rRNA where it nucleates assembly of the body of the 30S subunit.</text>
</comment>
<comment type="function">
    <text evidence="1">With S5 and S12 plays an important role in translational accuracy.</text>
</comment>
<comment type="subunit">
    <text evidence="1">Part of the 30S ribosomal subunit. Contacts protein S5. The interaction surface between S4 and S5 is involved in control of translational fidelity (By similarity).</text>
</comment>
<comment type="subcellular location">
    <subcellularLocation>
        <location>Plastid</location>
    </subcellularLocation>
</comment>
<comment type="similarity">
    <text evidence="3">Belongs to the universal ribosomal protein uS4 family.</text>
</comment>
<feature type="chain" id="PRO_0000132657" description="Small ribosomal subunit protein uS4c">
    <location>
        <begin position="1"/>
        <end position="207"/>
    </location>
</feature>
<feature type="domain" description="S4 RNA-binding">
    <location>
        <begin position="97"/>
        <end position="158"/>
    </location>
</feature>
<feature type="region of interest" description="Disordered" evidence="2">
    <location>
        <begin position="20"/>
        <end position="52"/>
    </location>
</feature>
<feature type="compositionally biased region" description="Basic and acidic residues" evidence="2">
    <location>
        <begin position="40"/>
        <end position="52"/>
    </location>
</feature>
<feature type="sequence conflict" description="In Ref. 2; CAA10996." evidence="3" ref="2">
    <original>Q</original>
    <variation>T</variation>
    <location>
        <position position="60"/>
    </location>
</feature>
<sequence length="207" mass="24058">MSRYRGPRLPIIRRLGELPGFSKKIDRNHTPPGQHGWKKKASDQKKSKESQYGIRLKEKQKLRYNYGINERQLINYVREARRRKGSTGEVLLQLLEMRLDNIIYRLGFAPTIPAARQLINHGHINVNNKNINIPSYICKINDIISVLKNSQQLIKNYLQNGGISELSTCLNLNKEKLEASINNIIPRDLVKLEINELLVIEYYSRKL</sequence>
<geneLocation type="non-photosynthetic plastid"/>